<sequence>MINVLLVDDHELVRAGIRRILEDIKGIKVVGEASCGEDAVKWCRANAVDVVLMDMSMPGIGGLEATRKIARSTADVKIIMLTVHTENPLPAKVMQAGAAGYLSKGAAPQEVVSAIRSVYSGQRYIASDIAQQMALSQIEPEKTESPFASLSERELQIMLMITKGQKVNEISEQLNLSPKTVNSYRYRMFSKLNIHGDVELTHLAIRHGLCNAETLSSQ</sequence>
<keyword id="KW-0963">Cytoplasm</keyword>
<keyword id="KW-0238">DNA-binding</keyword>
<keyword id="KW-0597">Phosphoprotein</keyword>
<keyword id="KW-1185">Reference proteome</keyword>
<keyword id="KW-0804">Transcription</keyword>
<keyword id="KW-0805">Transcription regulation</keyword>
<keyword id="KW-0902">Two-component regulatory system</keyword>
<evidence type="ECO:0000250" key="1"/>
<evidence type="ECO:0000255" key="2">
    <source>
        <dbReference type="PROSITE-ProRule" id="PRU00169"/>
    </source>
</evidence>
<evidence type="ECO:0000255" key="3">
    <source>
        <dbReference type="PROSITE-ProRule" id="PRU00411"/>
    </source>
</evidence>
<evidence type="ECO:0000305" key="4"/>
<comment type="function">
    <text evidence="1">Member of the two-component regulatory system UvrY/BarA involved in the regulation of carbon metabolism via the CsrA/CsrB regulatory system. UvrY activates the transcription of the untranslated csrB RNA and of barA, in an autoregulatory loop. Mediates the effects of CsrA on csrB RNA by BarA-dependent and BarA-independent mechanisms (By similarity).</text>
</comment>
<comment type="subcellular location">
    <subcellularLocation>
        <location evidence="4">Cytoplasm</location>
    </subcellularLocation>
</comment>
<comment type="PTM">
    <text evidence="1">Phosphorylated and activated by BarA.</text>
</comment>
<dbReference type="EMBL" id="AE014075">
    <property type="protein sequence ID" value="AAN80786.1"/>
    <property type="molecule type" value="Genomic_DNA"/>
</dbReference>
<dbReference type="RefSeq" id="WP_000611328.1">
    <property type="nucleotide sequence ID" value="NZ_CP051263.1"/>
</dbReference>
<dbReference type="SMR" id="P66797"/>
<dbReference type="STRING" id="199310.c2327"/>
<dbReference type="GeneID" id="75172035"/>
<dbReference type="KEGG" id="ecc:c2327"/>
<dbReference type="eggNOG" id="COG2197">
    <property type="taxonomic scope" value="Bacteria"/>
</dbReference>
<dbReference type="HOGENOM" id="CLU_000445_90_1_6"/>
<dbReference type="BioCyc" id="ECOL199310:C2327-MONOMER"/>
<dbReference type="Proteomes" id="UP000001410">
    <property type="component" value="Chromosome"/>
</dbReference>
<dbReference type="GO" id="GO:0005737">
    <property type="term" value="C:cytoplasm"/>
    <property type="evidence" value="ECO:0007669"/>
    <property type="project" value="UniProtKB-SubCell"/>
</dbReference>
<dbReference type="GO" id="GO:0003677">
    <property type="term" value="F:DNA binding"/>
    <property type="evidence" value="ECO:0007669"/>
    <property type="project" value="UniProtKB-KW"/>
</dbReference>
<dbReference type="GO" id="GO:0000160">
    <property type="term" value="P:phosphorelay signal transduction system"/>
    <property type="evidence" value="ECO:0007669"/>
    <property type="project" value="UniProtKB-KW"/>
</dbReference>
<dbReference type="GO" id="GO:0006355">
    <property type="term" value="P:regulation of DNA-templated transcription"/>
    <property type="evidence" value="ECO:0007669"/>
    <property type="project" value="InterPro"/>
</dbReference>
<dbReference type="CDD" id="cd06170">
    <property type="entry name" value="LuxR_C_like"/>
    <property type="match status" value="1"/>
</dbReference>
<dbReference type="CDD" id="cd17535">
    <property type="entry name" value="REC_NarL-like"/>
    <property type="match status" value="1"/>
</dbReference>
<dbReference type="FunFam" id="3.40.50.2300:FF:000015">
    <property type="entry name" value="Two-component response regulator UvrY"/>
    <property type="match status" value="1"/>
</dbReference>
<dbReference type="Gene3D" id="3.40.50.2300">
    <property type="match status" value="1"/>
</dbReference>
<dbReference type="InterPro" id="IPR011006">
    <property type="entry name" value="CheY-like_superfamily"/>
</dbReference>
<dbReference type="InterPro" id="IPR016032">
    <property type="entry name" value="Sig_transdc_resp-reg_C-effctor"/>
</dbReference>
<dbReference type="InterPro" id="IPR001789">
    <property type="entry name" value="Sig_transdc_resp-reg_receiver"/>
</dbReference>
<dbReference type="InterPro" id="IPR000792">
    <property type="entry name" value="Tscrpt_reg_LuxR_C"/>
</dbReference>
<dbReference type="InterPro" id="IPR039420">
    <property type="entry name" value="WalR-like"/>
</dbReference>
<dbReference type="NCBIfam" id="NF007018">
    <property type="entry name" value="PRK09483.1"/>
    <property type="match status" value="1"/>
</dbReference>
<dbReference type="PANTHER" id="PTHR43214:SF3">
    <property type="entry name" value="RESPONSE REGULATOR UVRY"/>
    <property type="match status" value="1"/>
</dbReference>
<dbReference type="PANTHER" id="PTHR43214">
    <property type="entry name" value="TWO-COMPONENT RESPONSE REGULATOR"/>
    <property type="match status" value="1"/>
</dbReference>
<dbReference type="Pfam" id="PF00196">
    <property type="entry name" value="GerE"/>
    <property type="match status" value="1"/>
</dbReference>
<dbReference type="Pfam" id="PF00072">
    <property type="entry name" value="Response_reg"/>
    <property type="match status" value="1"/>
</dbReference>
<dbReference type="PRINTS" id="PR00038">
    <property type="entry name" value="HTHLUXR"/>
</dbReference>
<dbReference type="SMART" id="SM00421">
    <property type="entry name" value="HTH_LUXR"/>
    <property type="match status" value="1"/>
</dbReference>
<dbReference type="SMART" id="SM00448">
    <property type="entry name" value="REC"/>
    <property type="match status" value="1"/>
</dbReference>
<dbReference type="SUPFAM" id="SSF46894">
    <property type="entry name" value="C-terminal effector domain of the bipartite response regulators"/>
    <property type="match status" value="1"/>
</dbReference>
<dbReference type="SUPFAM" id="SSF52172">
    <property type="entry name" value="CheY-like"/>
    <property type="match status" value="1"/>
</dbReference>
<dbReference type="PROSITE" id="PS00622">
    <property type="entry name" value="HTH_LUXR_1"/>
    <property type="match status" value="1"/>
</dbReference>
<dbReference type="PROSITE" id="PS50043">
    <property type="entry name" value="HTH_LUXR_2"/>
    <property type="match status" value="1"/>
</dbReference>
<dbReference type="PROSITE" id="PS50110">
    <property type="entry name" value="RESPONSE_REGULATORY"/>
    <property type="match status" value="1"/>
</dbReference>
<feature type="chain" id="PRO_0000081294" description="Response regulator UvrY">
    <location>
        <begin position="1"/>
        <end position="218"/>
    </location>
</feature>
<feature type="domain" description="Response regulatory" evidence="2">
    <location>
        <begin position="3"/>
        <end position="119"/>
    </location>
</feature>
<feature type="domain" description="HTH luxR-type" evidence="3">
    <location>
        <begin position="143"/>
        <end position="208"/>
    </location>
</feature>
<feature type="DNA-binding region" description="H-T-H motif" evidence="3">
    <location>
        <begin position="167"/>
        <end position="186"/>
    </location>
</feature>
<feature type="modified residue" description="4-aspartylphosphate" evidence="2">
    <location>
        <position position="54"/>
    </location>
</feature>
<protein>
    <recommendedName>
        <fullName>Response regulator UvrY</fullName>
    </recommendedName>
</protein>
<proteinExistence type="inferred from homology"/>
<organism>
    <name type="scientific">Escherichia coli O6:H1 (strain CFT073 / ATCC 700928 / UPEC)</name>
    <dbReference type="NCBI Taxonomy" id="199310"/>
    <lineage>
        <taxon>Bacteria</taxon>
        <taxon>Pseudomonadati</taxon>
        <taxon>Pseudomonadota</taxon>
        <taxon>Gammaproteobacteria</taxon>
        <taxon>Enterobacterales</taxon>
        <taxon>Enterobacteriaceae</taxon>
        <taxon>Escherichia</taxon>
    </lineage>
</organism>
<name>UVRY_ECOL6</name>
<reference key="1">
    <citation type="journal article" date="2002" name="Proc. Natl. Acad. Sci. U.S.A.">
        <title>Extensive mosaic structure revealed by the complete genome sequence of uropathogenic Escherichia coli.</title>
        <authorList>
            <person name="Welch R.A."/>
            <person name="Burland V."/>
            <person name="Plunkett G. III"/>
            <person name="Redford P."/>
            <person name="Roesch P."/>
            <person name="Rasko D."/>
            <person name="Buckles E.L."/>
            <person name="Liou S.-R."/>
            <person name="Boutin A."/>
            <person name="Hackett J."/>
            <person name="Stroud D."/>
            <person name="Mayhew G.F."/>
            <person name="Rose D.J."/>
            <person name="Zhou S."/>
            <person name="Schwartz D.C."/>
            <person name="Perna N.T."/>
            <person name="Mobley H.L.T."/>
            <person name="Donnenberg M.S."/>
            <person name="Blattner F.R."/>
        </authorList>
    </citation>
    <scope>NUCLEOTIDE SEQUENCE [LARGE SCALE GENOMIC DNA]</scope>
    <source>
        <strain>CFT073 / ATCC 700928 / UPEC</strain>
    </source>
</reference>
<accession>P66797</accession>
<accession>Q8XBD4</accession>
<gene>
    <name type="primary">uvrY</name>
    <name type="ordered locus">c2327</name>
</gene>